<organism>
    <name type="scientific">Penicillium crustosum</name>
    <name type="common">Blue mold fungus</name>
    <dbReference type="NCBI Taxonomy" id="36656"/>
    <lineage>
        <taxon>Eukaryota</taxon>
        <taxon>Fungi</taxon>
        <taxon>Dikarya</taxon>
        <taxon>Ascomycota</taxon>
        <taxon>Pezizomycotina</taxon>
        <taxon>Eurotiomycetes</taxon>
        <taxon>Eurotiomycetidae</taxon>
        <taxon>Eurotiales</taxon>
        <taxon>Aspergillaceae</taxon>
        <taxon>Penicillium</taxon>
    </lineage>
</organism>
<evidence type="ECO:0000255" key="1">
    <source>
        <dbReference type="PROSITE-ProRule" id="PRU00718"/>
    </source>
</evidence>
<evidence type="ECO:0000269" key="2">
    <source>
    </source>
</evidence>
<evidence type="ECO:0000303" key="3">
    <source>
    </source>
</evidence>
<evidence type="ECO:0000305" key="4"/>
<evidence type="ECO:0000305" key="5">
    <source>
    </source>
</evidence>
<dbReference type="EC" id="1.1.1.-" evidence="5"/>
<dbReference type="EMBL" id="KC963408">
    <property type="protein sequence ID" value="AGZ20199.1"/>
    <property type="molecule type" value="Genomic_DNA"/>
</dbReference>
<dbReference type="SMR" id="A0A0E3D8N6"/>
<dbReference type="OrthoDB" id="415825at2759"/>
<dbReference type="GO" id="GO:0071949">
    <property type="term" value="F:FAD binding"/>
    <property type="evidence" value="ECO:0007669"/>
    <property type="project" value="InterPro"/>
</dbReference>
<dbReference type="GO" id="GO:0016491">
    <property type="term" value="F:oxidoreductase activity"/>
    <property type="evidence" value="ECO:0007669"/>
    <property type="project" value="UniProtKB-KW"/>
</dbReference>
<dbReference type="Gene3D" id="3.30.465.10">
    <property type="match status" value="1"/>
</dbReference>
<dbReference type="Gene3D" id="3.40.462.20">
    <property type="match status" value="1"/>
</dbReference>
<dbReference type="Gene3D" id="3.30.43.10">
    <property type="entry name" value="Uridine Diphospho-n-acetylenolpyruvylglucosamine Reductase, domain 2"/>
    <property type="match status" value="1"/>
</dbReference>
<dbReference type="InterPro" id="IPR016166">
    <property type="entry name" value="FAD-bd_PCMH"/>
</dbReference>
<dbReference type="InterPro" id="IPR036318">
    <property type="entry name" value="FAD-bd_PCMH-like_sf"/>
</dbReference>
<dbReference type="InterPro" id="IPR016167">
    <property type="entry name" value="FAD-bd_PCMH_sub1"/>
</dbReference>
<dbReference type="InterPro" id="IPR016169">
    <property type="entry name" value="FAD-bd_PCMH_sub2"/>
</dbReference>
<dbReference type="InterPro" id="IPR050416">
    <property type="entry name" value="FAD-linked_Oxidoreductase"/>
</dbReference>
<dbReference type="InterPro" id="IPR006094">
    <property type="entry name" value="Oxid_FAD_bind_N"/>
</dbReference>
<dbReference type="PANTHER" id="PTHR42973">
    <property type="entry name" value="BINDING OXIDOREDUCTASE, PUTATIVE (AFU_ORTHOLOGUE AFUA_1G17690)-RELATED"/>
    <property type="match status" value="1"/>
</dbReference>
<dbReference type="PANTHER" id="PTHR42973:SF39">
    <property type="entry name" value="FAD-BINDING PCMH-TYPE DOMAIN-CONTAINING PROTEIN"/>
    <property type="match status" value="1"/>
</dbReference>
<dbReference type="Pfam" id="PF01565">
    <property type="entry name" value="FAD_binding_4"/>
    <property type="match status" value="1"/>
</dbReference>
<dbReference type="SUPFAM" id="SSF56176">
    <property type="entry name" value="FAD-binding/transporter-associated domain-like"/>
    <property type="match status" value="1"/>
</dbReference>
<dbReference type="PROSITE" id="PS51387">
    <property type="entry name" value="FAD_PCMH"/>
    <property type="match status" value="1"/>
</dbReference>
<gene>
    <name evidence="3" type="primary">penO</name>
</gene>
<protein>
    <recommendedName>
        <fullName evidence="3">FAD-linked oxidoreductase penO</fullName>
        <ecNumber evidence="5">1.1.1.-</ecNumber>
    </recommendedName>
    <alternativeName>
        <fullName evidence="3">Penitrem biosynthesis cluster protein O</fullName>
    </alternativeName>
</protein>
<comment type="function">
    <text evidence="2 5">FAD-linked oxidoreductase; part of the gene cluster that mediates the biosynthesis of the indole diterpenes penitrems (PubMed:26213965). The geranylgeranyl diphosphate (GGPP) synthase penG catalyzes the first step in penitrem biosynthesis via conversion of farnesyl pyrophosphate and isopentyl pyrophosphate into geranylgeranyl pyrophosphate (GGPP) (Probable). Condensation of indole-3-glycerol phosphate with GGPP by the prenyl transferase penC then forms 3-geranylgeranylindole (3-GGI) (Probable). Epoxidation by the FAD-dependent monooxygenase penM leads to a epoxidized-GGI that is substrate of the terpene cyclase penB for cyclization to yield paspaline (Probable). Paspaline is subsequently converted to 13-desoxypaxilline by the cytochrome P450 monooxygenase penP, the latter being then converted to paxilline by the cytochrome P450 monooxygenase penQ (PubMed:26213965). Paxilline is converted to beta-paxitriol via C-10 ketoreduction by the short-chain dehydrogenase PC-15 which can be monoprenylated at the C-20 by the indole diterpene prenyltransferase penD (Probable). A two-step elimination (acetylation and elimination) process performed by the O-acetyltransferase PC-16 and the P.simplicissimum ptmI-ortholog not yet identified in P.crustosum, leads to the production of the prenylated form of penijanthine (Probable). The FAD-linked oxidoreductase ptmO then converts the prenylated form of penijanthine into PC-M5 which is in turn transformed into PC-M4 by the aromatic dimethylallyltransferase PC-22 (Probable). A series of oxidation steps involving 4 cytochrome P450 monooxygenases (PC-21, PC-05, PC-23, PC-20) and a FAD-dependent monooxygenase (PC-14) are required for the transformation of PC-M4 to penitrems A and E. Synthesis of these final products is proposed to proceed via penitrems D and C (PC-21, PC-05, PC-14) and penitrems B and F (PC-21, PC-05, PC-14, PC-23) (Probable).</text>
</comment>
<comment type="cofactor">
    <cofactor evidence="4">
        <name>FAD</name>
        <dbReference type="ChEBI" id="CHEBI:57692"/>
    </cofactor>
</comment>
<comment type="pathway">
    <text evidence="5">Secondary metabolite biosynthesis.</text>
</comment>
<comment type="similarity">
    <text evidence="4">Belongs to the oxygen-dependent FAD-linked oxidoreductase family.</text>
</comment>
<feature type="chain" id="PRO_0000446569" description="FAD-linked oxidoreductase penO">
    <location>
        <begin position="1"/>
        <end position="450"/>
    </location>
</feature>
<feature type="domain" description="FAD-binding PCMH-type" evidence="1">
    <location>
        <begin position="32"/>
        <end position="203"/>
    </location>
</feature>
<proteinExistence type="inferred from homology"/>
<accession>A0A0E3D8N6</accession>
<name>PENO_PENCR</name>
<keyword id="KW-0274">FAD</keyword>
<keyword id="KW-0285">Flavoprotein</keyword>
<keyword id="KW-0560">Oxidoreductase</keyword>
<reference key="1">
    <citation type="journal article" date="2015" name="Toxins">
        <title>Molecular cloning and functional analysis of gene clusters for the biosynthesis of indole-diterpenes in Penicillium crustosum and P. janthinellum.</title>
        <authorList>
            <person name="Nicholson M.J."/>
            <person name="Eaton C.J."/>
            <person name="Starkel C."/>
            <person name="Tapper B.A."/>
            <person name="Cox M.P."/>
            <person name="Scott B."/>
        </authorList>
    </citation>
    <scope>NUCLEOTIDE SEQUENCE [GENOMIC DNA]</scope>
    <scope>IDENTIFICATION</scope>
    <scope>FUNCTION</scope>
    <scope>PATHWAY</scope>
    <source>
        <strain>PN2402</strain>
    </source>
</reference>
<sequence>MKHTLPSALVTLWRDSPGYESARSRTFNQRVPPELPYAIVKPKNVEQIQQAVQLAIDLDKQIRIRSGGHSLAGWTLCADSILIDLVDFMHLEYDATTAIASASPSATSAQLNDLLVPHGRFVPVGHCGDVGLGGFFLQGGMGLNCRSYGWACEYLVGVDLITADGEYKHCSESENADLFWAARGAGPEFPAIVTRFFIRTRPAAAKHEKSTFIWPVACSDAVVSWILKILPELHADIEPLVVSTIVPGPNIAAILVQFLVFLGTNETGAEKLEPSLTAMPDGTIMEFKGVSTSIQQEYVSQEGTMPRDSRYICDSVWFKDGIDFVAVTRRMFREFPRDRSMVYWEPKYPTSRRKLPDMAFSLQADQYLALFAIFEDSQQDQEQGIRIQEFIQEIEPYVLGTFAADGVPAVRKTQYWSAEVIERLYSVCQKWDPAHRLGCTLLDPTRKMKS</sequence>